<evidence type="ECO:0000255" key="1">
    <source>
        <dbReference type="PROSITE-ProRule" id="PRU10127"/>
    </source>
</evidence>
<organism>
    <name type="scientific">Aedes togoi</name>
    <name type="common">Mosquito</name>
    <name type="synonym">Ochlerotatus togoi</name>
    <dbReference type="NCBI Taxonomy" id="55967"/>
    <lineage>
        <taxon>Eukaryota</taxon>
        <taxon>Metazoa</taxon>
        <taxon>Ecdysozoa</taxon>
        <taxon>Arthropoda</taxon>
        <taxon>Hexapoda</taxon>
        <taxon>Insecta</taxon>
        <taxon>Pterygota</taxon>
        <taxon>Neoptera</taxon>
        <taxon>Endopterygota</taxon>
        <taxon>Diptera</taxon>
        <taxon>Nematocera</taxon>
        <taxon>Culicoidea</taxon>
        <taxon>Culicidae</taxon>
        <taxon>Culicinae</taxon>
        <taxon>Aedini</taxon>
        <taxon>Aedes</taxon>
        <taxon>Finlaya</taxon>
    </lineage>
</organism>
<sequence length="206" mass="21925">SIAELCKVLTTGPLNADTEVVVGCPAPYLTLARSQLPDSVGVAAQNCYKVAKGAFTGEISPAMLKDLNIGWVILGHSERRAIFGESDELIADKVAHALAEGLKVIACIGETLQEREAGQTEAVCFRQTKAIADKVKDWSNVVVAYEPVWAIGTGKTATPEQAQEVHVALRKWFTDNVSADVSASIRIQYGGSVTAANCRELAAKPD</sequence>
<gene>
    <name type="primary">Tpi</name>
</gene>
<proteinExistence type="inferred from homology"/>
<accession>P92119</accession>
<dbReference type="EC" id="5.3.1.1"/>
<dbReference type="EMBL" id="U82708">
    <property type="protein sequence ID" value="AAB48449.1"/>
    <property type="molecule type" value="Genomic_DNA"/>
</dbReference>
<dbReference type="SMR" id="P92119"/>
<dbReference type="UniPathway" id="UPA00109">
    <property type="reaction ID" value="UER00189"/>
</dbReference>
<dbReference type="UniPathway" id="UPA00138"/>
<dbReference type="GO" id="GO:0005829">
    <property type="term" value="C:cytosol"/>
    <property type="evidence" value="ECO:0007669"/>
    <property type="project" value="TreeGrafter"/>
</dbReference>
<dbReference type="GO" id="GO:0004807">
    <property type="term" value="F:triose-phosphate isomerase activity"/>
    <property type="evidence" value="ECO:0007669"/>
    <property type="project" value="UniProtKB-EC"/>
</dbReference>
<dbReference type="GO" id="GO:0006094">
    <property type="term" value="P:gluconeogenesis"/>
    <property type="evidence" value="ECO:0007669"/>
    <property type="project" value="UniProtKB-UniPathway"/>
</dbReference>
<dbReference type="GO" id="GO:0046166">
    <property type="term" value="P:glyceraldehyde-3-phosphate biosynthetic process"/>
    <property type="evidence" value="ECO:0007669"/>
    <property type="project" value="TreeGrafter"/>
</dbReference>
<dbReference type="GO" id="GO:0019563">
    <property type="term" value="P:glycerol catabolic process"/>
    <property type="evidence" value="ECO:0007669"/>
    <property type="project" value="TreeGrafter"/>
</dbReference>
<dbReference type="GO" id="GO:0006096">
    <property type="term" value="P:glycolytic process"/>
    <property type="evidence" value="ECO:0007669"/>
    <property type="project" value="UniProtKB-UniPathway"/>
</dbReference>
<dbReference type="CDD" id="cd00311">
    <property type="entry name" value="TIM"/>
    <property type="match status" value="1"/>
</dbReference>
<dbReference type="Gene3D" id="3.20.20.70">
    <property type="entry name" value="Aldolase class I"/>
    <property type="match status" value="1"/>
</dbReference>
<dbReference type="HAMAP" id="MF_00147_B">
    <property type="entry name" value="TIM_B"/>
    <property type="match status" value="1"/>
</dbReference>
<dbReference type="InterPro" id="IPR013785">
    <property type="entry name" value="Aldolase_TIM"/>
</dbReference>
<dbReference type="InterPro" id="IPR035990">
    <property type="entry name" value="TIM_sf"/>
</dbReference>
<dbReference type="InterPro" id="IPR022896">
    <property type="entry name" value="TrioseP_Isoase_bac/euk"/>
</dbReference>
<dbReference type="InterPro" id="IPR000652">
    <property type="entry name" value="Triosephosphate_isomerase"/>
</dbReference>
<dbReference type="InterPro" id="IPR020861">
    <property type="entry name" value="Triosephosphate_isomerase_AS"/>
</dbReference>
<dbReference type="NCBIfam" id="TIGR00419">
    <property type="entry name" value="tim"/>
    <property type="match status" value="1"/>
</dbReference>
<dbReference type="PANTHER" id="PTHR21139">
    <property type="entry name" value="TRIOSEPHOSPHATE ISOMERASE"/>
    <property type="match status" value="1"/>
</dbReference>
<dbReference type="PANTHER" id="PTHR21139:SF2">
    <property type="entry name" value="TRIOSEPHOSPHATE ISOMERASE"/>
    <property type="match status" value="1"/>
</dbReference>
<dbReference type="Pfam" id="PF00121">
    <property type="entry name" value="TIM"/>
    <property type="match status" value="1"/>
</dbReference>
<dbReference type="SUPFAM" id="SSF51351">
    <property type="entry name" value="Triosephosphate isomerase (TIM)"/>
    <property type="match status" value="1"/>
</dbReference>
<dbReference type="PROSITE" id="PS00171">
    <property type="entry name" value="TIM_1"/>
    <property type="match status" value="1"/>
</dbReference>
<dbReference type="PROSITE" id="PS51440">
    <property type="entry name" value="TIM_2"/>
    <property type="match status" value="1"/>
</dbReference>
<keyword id="KW-0312">Gluconeogenesis</keyword>
<keyword id="KW-0324">Glycolysis</keyword>
<keyword id="KW-0413">Isomerase</keyword>
<name>TPIS_AEDTO</name>
<feature type="chain" id="PRO_0000090124" description="Triosephosphate isomerase">
    <location>
        <begin position="1" status="less than"/>
        <end position="206" status="greater than"/>
    </location>
</feature>
<feature type="active site" description="Electrophile" evidence="1">
    <location>
        <position position="76"/>
    </location>
</feature>
<feature type="active site" description="Proton acceptor" evidence="1">
    <location>
        <position position="146"/>
    </location>
</feature>
<feature type="non-terminal residue">
    <location>
        <position position="1"/>
    </location>
</feature>
<feature type="non-terminal residue">
    <location>
        <position position="206"/>
    </location>
</feature>
<reference key="1">
    <citation type="journal article" date="1997" name="Biochim. Biophys. Acta">
        <title>Towards a reconciliation of the introns early or late views: triosephosphate isomerase genes from insects.</title>
        <authorList>
            <person name="Tyshenko M.G."/>
            <person name="Walker V.K."/>
        </authorList>
    </citation>
    <scope>NUCLEOTIDE SEQUENCE [GENOMIC DNA]</scope>
</reference>
<comment type="catalytic activity">
    <reaction evidence="1">
        <text>D-glyceraldehyde 3-phosphate = dihydroxyacetone phosphate</text>
        <dbReference type="Rhea" id="RHEA:18585"/>
        <dbReference type="ChEBI" id="CHEBI:57642"/>
        <dbReference type="ChEBI" id="CHEBI:59776"/>
        <dbReference type="EC" id="5.3.1.1"/>
    </reaction>
</comment>
<comment type="pathway">
    <text evidence="1">Carbohydrate biosynthesis; gluconeogenesis.</text>
</comment>
<comment type="pathway">
    <text evidence="1">Carbohydrate degradation; glycolysis; D-glyceraldehyde 3-phosphate from glycerone phosphate: step 1/1.</text>
</comment>
<comment type="subunit">
    <text evidence="1">Homodimer.</text>
</comment>
<comment type="similarity">
    <text evidence="1">Belongs to the triosephosphate isomerase family.</text>
</comment>
<protein>
    <recommendedName>
        <fullName>Triosephosphate isomerase</fullName>
        <shortName>TIM</shortName>
        <ecNumber>5.3.1.1</ecNumber>
    </recommendedName>
    <alternativeName>
        <fullName>Triose-phosphate isomerase</fullName>
    </alternativeName>
</protein>